<dbReference type="EMBL" id="AL136677">
    <property type="protein sequence ID" value="CAB66612.1"/>
    <property type="molecule type" value="mRNA"/>
</dbReference>
<dbReference type="EMBL" id="AK000505">
    <property type="protein sequence ID" value="BAA91212.1"/>
    <property type="molecule type" value="mRNA"/>
</dbReference>
<dbReference type="EMBL" id="AK304885">
    <property type="protein sequence ID" value="BAG65622.1"/>
    <property type="molecule type" value="mRNA"/>
</dbReference>
<dbReference type="EMBL" id="AC108456">
    <property type="status" value="NOT_ANNOTATED_CDS"/>
    <property type="molecule type" value="Genomic_DNA"/>
</dbReference>
<dbReference type="EMBL" id="AC131571">
    <property type="status" value="NOT_ANNOTATED_CDS"/>
    <property type="molecule type" value="Genomic_DNA"/>
</dbReference>
<dbReference type="EMBL" id="Z83001">
    <property type="status" value="NOT_ANNOTATED_CDS"/>
    <property type="molecule type" value="Genomic_DNA"/>
</dbReference>
<dbReference type="EMBL" id="Z83306">
    <property type="status" value="NOT_ANNOTATED_CDS"/>
    <property type="molecule type" value="Genomic_DNA"/>
</dbReference>
<dbReference type="EMBL" id="Z83307">
    <property type="status" value="NOT_ANNOTATED_CDS"/>
    <property type="molecule type" value="Genomic_DNA"/>
</dbReference>
<dbReference type="EMBL" id="BC012514">
    <property type="protein sequence ID" value="AAH12514.1"/>
    <property type="molecule type" value="mRNA"/>
</dbReference>
<dbReference type="EMBL" id="AJ276005">
    <property type="protein sequence ID" value="CAC08200.1"/>
    <property type="molecule type" value="Genomic_DNA"/>
</dbReference>
<dbReference type="CCDS" id="CCDS73271.1">
    <molecule id="Q96EB1-3"/>
</dbReference>
<dbReference type="CCDS" id="CCDS73272.1">
    <molecule id="Q96EB1-2"/>
</dbReference>
<dbReference type="CCDS" id="CCDS7875.2">
    <molecule id="Q96EB1-1"/>
</dbReference>
<dbReference type="RefSeq" id="NP_001275654.1">
    <molecule id="Q96EB1-3"/>
    <property type="nucleotide sequence ID" value="NM_001288725.2"/>
</dbReference>
<dbReference type="RefSeq" id="NP_001275655.1">
    <property type="nucleotide sequence ID" value="NM_001288726.1"/>
</dbReference>
<dbReference type="RefSeq" id="NP_061913.3">
    <molecule id="Q96EB1-1"/>
    <property type="nucleotide sequence ID" value="NM_019040.4"/>
</dbReference>
<dbReference type="SMR" id="Q96EB1"/>
<dbReference type="BioGRID" id="117764">
    <property type="interactions" value="65"/>
</dbReference>
<dbReference type="ComplexPortal" id="CPX-1949">
    <property type="entry name" value="Elongator holoenzyme complex"/>
</dbReference>
<dbReference type="CORUM" id="Q96EB1"/>
<dbReference type="FunCoup" id="Q96EB1">
    <property type="interactions" value="2869"/>
</dbReference>
<dbReference type="IntAct" id="Q96EB1">
    <property type="interactions" value="22"/>
</dbReference>
<dbReference type="MINT" id="Q96EB1"/>
<dbReference type="STRING" id="9606.ENSP00000379267"/>
<dbReference type="GlyGen" id="Q96EB1">
    <property type="glycosylation" value="3 sites, 1 N-linked glycan (1 site), 1 O-linked glycan (2 sites)"/>
</dbReference>
<dbReference type="iPTMnet" id="Q96EB1"/>
<dbReference type="PhosphoSitePlus" id="Q96EB1"/>
<dbReference type="BioMuta" id="ELP4"/>
<dbReference type="DMDM" id="145558903"/>
<dbReference type="jPOST" id="Q96EB1"/>
<dbReference type="MassIVE" id="Q96EB1"/>
<dbReference type="PaxDb" id="9606-ENSP00000379267"/>
<dbReference type="PeptideAtlas" id="Q96EB1"/>
<dbReference type="ProteomicsDB" id="5926"/>
<dbReference type="ProteomicsDB" id="76391">
    <molecule id="Q96EB1-1"/>
</dbReference>
<dbReference type="ProteomicsDB" id="76392">
    <molecule id="Q96EB1-2"/>
</dbReference>
<dbReference type="Pumba" id="Q96EB1"/>
<dbReference type="Antibodypedia" id="25549">
    <property type="antibodies" value="158 antibodies from 25 providers"/>
</dbReference>
<dbReference type="DNASU" id="26610"/>
<dbReference type="Ensembl" id="ENST00000379163.10">
    <molecule id="Q96EB1-3"/>
    <property type="protein sequence ID" value="ENSP00000368461.5"/>
    <property type="gene ID" value="ENSG00000109911.19"/>
</dbReference>
<dbReference type="Ensembl" id="ENST00000640961.2">
    <molecule id="Q96EB1-1"/>
    <property type="protein sequence ID" value="ENSP00000492152.1"/>
    <property type="gene ID" value="ENSG00000109911.19"/>
</dbReference>
<dbReference type="GeneID" id="26610"/>
<dbReference type="KEGG" id="hsa:26610"/>
<dbReference type="MANE-Select" id="ENST00000640961.2">
    <property type="protein sequence ID" value="ENSP00000492152.1"/>
    <property type="RefSeq nucleotide sequence ID" value="NM_019040.5"/>
    <property type="RefSeq protein sequence ID" value="NP_061913.3"/>
</dbReference>
<dbReference type="UCSC" id="uc001mtb.5">
    <molecule id="Q96EB1-1"/>
    <property type="organism name" value="human"/>
</dbReference>
<dbReference type="AGR" id="HGNC:1171"/>
<dbReference type="CTD" id="26610"/>
<dbReference type="DisGeNET" id="26610"/>
<dbReference type="GeneCards" id="ELP4"/>
<dbReference type="HGNC" id="HGNC:1171">
    <property type="gene designation" value="ELP4"/>
</dbReference>
<dbReference type="HPA" id="ENSG00000109911">
    <property type="expression patterns" value="Low tissue specificity"/>
</dbReference>
<dbReference type="MalaCards" id="ELP4"/>
<dbReference type="MIM" id="606985">
    <property type="type" value="gene"/>
</dbReference>
<dbReference type="MIM" id="617141">
    <property type="type" value="phenotype"/>
</dbReference>
<dbReference type="neXtProt" id="NX_Q96EB1"/>
<dbReference type="OpenTargets" id="ENSG00000109911"/>
<dbReference type="PharmGKB" id="PA27764"/>
<dbReference type="VEuPathDB" id="HostDB:ENSG00000109911"/>
<dbReference type="eggNOG" id="KOG3949">
    <property type="taxonomic scope" value="Eukaryota"/>
</dbReference>
<dbReference type="GeneTree" id="ENSGT00390000001443"/>
<dbReference type="HOGENOM" id="CLU_031345_3_1_1"/>
<dbReference type="InParanoid" id="Q96EB1"/>
<dbReference type="OrthoDB" id="289162at2759"/>
<dbReference type="PAN-GO" id="Q96EB1">
    <property type="GO annotations" value="4 GO annotations based on evolutionary models"/>
</dbReference>
<dbReference type="PhylomeDB" id="Q96EB1"/>
<dbReference type="TreeFam" id="TF320797"/>
<dbReference type="BioCyc" id="MetaCyc:ENSG00000109911-MONOMER"/>
<dbReference type="PathwayCommons" id="Q96EB1"/>
<dbReference type="Reactome" id="R-HSA-3214847">
    <property type="pathway name" value="HATs acetylate histones"/>
</dbReference>
<dbReference type="SignaLink" id="Q96EB1"/>
<dbReference type="SIGNOR" id="Q96EB1"/>
<dbReference type="UniPathway" id="UPA00988"/>
<dbReference type="BioGRID-ORCS" id="26610">
    <property type="hits" value="485 hits in 1172 CRISPR screens"/>
</dbReference>
<dbReference type="ChiTaRS" id="ELP4">
    <property type="organism name" value="human"/>
</dbReference>
<dbReference type="GeneWiki" id="ELP4"/>
<dbReference type="GenomeRNAi" id="26610"/>
<dbReference type="Pharos" id="Q96EB1">
    <property type="development level" value="Tbio"/>
</dbReference>
<dbReference type="PRO" id="PR:Q96EB1"/>
<dbReference type="Proteomes" id="UP000005640">
    <property type="component" value="Chromosome 11"/>
</dbReference>
<dbReference type="RNAct" id="Q96EB1">
    <property type="molecule type" value="protein"/>
</dbReference>
<dbReference type="Bgee" id="ENSG00000109911">
    <property type="expression patterns" value="Expressed in ventricular zone and 169 other cell types or tissues"/>
</dbReference>
<dbReference type="ExpressionAtlas" id="Q96EB1">
    <property type="expression patterns" value="baseline and differential"/>
</dbReference>
<dbReference type="GO" id="GO:0005737">
    <property type="term" value="C:cytoplasm"/>
    <property type="evidence" value="ECO:0000314"/>
    <property type="project" value="UniProtKB"/>
</dbReference>
<dbReference type="GO" id="GO:0033588">
    <property type="term" value="C:elongator holoenzyme complex"/>
    <property type="evidence" value="ECO:0000314"/>
    <property type="project" value="UniProtKB"/>
</dbReference>
<dbReference type="GO" id="GO:0005654">
    <property type="term" value="C:nucleoplasm"/>
    <property type="evidence" value="ECO:0000314"/>
    <property type="project" value="HPA"/>
</dbReference>
<dbReference type="GO" id="GO:0008023">
    <property type="term" value="C:transcription elongation factor complex"/>
    <property type="evidence" value="ECO:0000314"/>
    <property type="project" value="UniProtKB"/>
</dbReference>
<dbReference type="GO" id="GO:0008607">
    <property type="term" value="F:phosphorylase kinase regulator activity"/>
    <property type="evidence" value="ECO:0000314"/>
    <property type="project" value="UniProtKB"/>
</dbReference>
<dbReference type="GO" id="GO:0006357">
    <property type="term" value="P:regulation of transcription by RNA polymerase II"/>
    <property type="evidence" value="ECO:0000314"/>
    <property type="project" value="UniProtKB"/>
</dbReference>
<dbReference type="GO" id="GO:0006417">
    <property type="term" value="P:regulation of translation"/>
    <property type="evidence" value="ECO:0000303"/>
    <property type="project" value="ComplexPortal"/>
</dbReference>
<dbReference type="GO" id="GO:0002098">
    <property type="term" value="P:tRNA wobble uridine modification"/>
    <property type="evidence" value="ECO:0000318"/>
    <property type="project" value="GO_Central"/>
</dbReference>
<dbReference type="CDD" id="cd19494">
    <property type="entry name" value="Elp4"/>
    <property type="match status" value="1"/>
</dbReference>
<dbReference type="FunFam" id="3.40.50.300:FF:000623">
    <property type="entry name" value="Elongator acetyltransferase complex subunit 4"/>
    <property type="match status" value="1"/>
</dbReference>
<dbReference type="Gene3D" id="3.40.50.300">
    <property type="entry name" value="P-loop containing nucleotide triphosphate hydrolases"/>
    <property type="match status" value="1"/>
</dbReference>
<dbReference type="InterPro" id="IPR008728">
    <property type="entry name" value="Elongator_complex_protein_4"/>
</dbReference>
<dbReference type="InterPro" id="IPR027417">
    <property type="entry name" value="P-loop_NTPase"/>
</dbReference>
<dbReference type="PANTHER" id="PTHR12896:SF1">
    <property type="entry name" value="ELONGATOR COMPLEX PROTEIN 4"/>
    <property type="match status" value="1"/>
</dbReference>
<dbReference type="PANTHER" id="PTHR12896">
    <property type="entry name" value="PAX6 NEIGHBOR PROTEIN PAXNEB"/>
    <property type="match status" value="1"/>
</dbReference>
<dbReference type="Pfam" id="PF05625">
    <property type="entry name" value="PAXNEB"/>
    <property type="match status" value="1"/>
</dbReference>
<accession>Q96EB1</accession>
<accession>B4E3W0</accession>
<accession>E7EPZ6</accession>
<accession>Q9H4E8</accession>
<accession>Q9NX11</accession>
<comment type="function">
    <text evidence="8">Component of the elongator complex which is required for multiple tRNA modifications, including mcm5U (5-methoxycarbonylmethyl uridine), mcm5s2U (5-methoxycarbonylmethyl-2-thiouridine), and ncm5U (5-carbamoylmethyl uridine) (PubMed:29332244). The elongator complex catalyzes the formation of carboxymethyluridine in the wobble base at position 34 in tRNAs (PubMed:29332244).</text>
</comment>
<comment type="pathway">
    <text evidence="8">tRNA modification; 5-methoxycarbonylmethyl-2-thiouridine-tRNA biosynthesis.</text>
</comment>
<comment type="subunit">
    <text evidence="1 4">Component of the elongator complex which consists of ELP1, ELP2, ELP3, ELP4, ELP5 and ELP6 (PubMed:11714725, PubMed:22854966).</text>
</comment>
<comment type="interaction">
    <interactant intactId="EBI-3951755">
        <id>Q96EB1</id>
    </interactant>
    <interactant intactId="EBI-946189">
        <id>Q8TE02</id>
        <label>ELP5</label>
    </interactant>
    <organismsDiffer>false</organismsDiffer>
    <experiments>6</experiments>
</comment>
<comment type="subcellular location">
    <subcellularLocation>
        <location evidence="2 3 4">Cytoplasm</location>
    </subcellularLocation>
    <subcellularLocation>
        <location evidence="3">Nucleus</location>
    </subcellularLocation>
</comment>
<comment type="alternative products">
    <event type="alternative splicing"/>
    <isoform>
        <id>Q96EB1-1</id>
        <name>1</name>
        <sequence type="displayed"/>
    </isoform>
    <isoform>
        <id>Q96EB1-2</id>
        <name>2</name>
        <sequence type="described" ref="VSP_024409"/>
    </isoform>
    <isoform>
        <id>Q96EB1-3</id>
        <name>3</name>
        <sequence type="described" ref="VSP_054128 VSP_054129"/>
    </isoform>
</comment>
<comment type="tissue specificity">
    <text evidence="3">Widely expressed.</text>
</comment>
<comment type="disease" evidence="5">
    <disease id="DI-04858">
        <name>Aniridia 2</name>
        <acronym>AN2</acronym>
        <description>A form of aniridia, a congenital, bilateral, panocular disorder characterized by complete absence of the iris or extreme iris hypoplasia. Aniridia is not just an isolated defect in iris development but it is associated with macular and optic nerve hypoplasia, cataract, corneal changes, nystagmus. Visual acuity is generally low but is unrelated to the degree of iris hypoplasia. Glaucoma is a secondary problem causing additional visual loss over time.</description>
        <dbReference type="MIM" id="617141"/>
    </disease>
    <text evidence="5">The disease is caused by variants affecting the gene represented in this entry. A disease-causing mutation is located in intron 9 of ELP4. The mutation does not alter normal ELP4 expression and function, but disrupts a long-range cis-regulatory element of PAX6 expression, known as SIMO. SIMO is contained within ELP4 intron 9 and located 150 kb downstream of PAX6.</text>
</comment>
<comment type="similarity">
    <text evidence="9">Belongs to the ELP4 family.</text>
</comment>
<comment type="caution">
    <text evidence="10 11 12 13">The elongator complex was originally thought to play a role in transcription elongation. However, it is no longer thought to play a direct role in this process and its primary function is thought to be in tRNA modification.</text>
</comment>
<evidence type="ECO:0000269" key="1">
    <source>
    </source>
</evidence>
<evidence type="ECO:0000269" key="2">
    <source>
    </source>
</evidence>
<evidence type="ECO:0000269" key="3">
    <source>
    </source>
</evidence>
<evidence type="ECO:0000269" key="4">
    <source>
    </source>
</evidence>
<evidence type="ECO:0000269" key="5">
    <source>
    </source>
</evidence>
<evidence type="ECO:0000303" key="6">
    <source>
    </source>
</evidence>
<evidence type="ECO:0000303" key="7">
    <source>
    </source>
</evidence>
<evidence type="ECO:0000303" key="8">
    <source>
    </source>
</evidence>
<evidence type="ECO:0000305" key="9"/>
<evidence type="ECO:0000305" key="10">
    <source>
    </source>
</evidence>
<evidence type="ECO:0000305" key="11">
    <source>
    </source>
</evidence>
<evidence type="ECO:0000305" key="12">
    <source>
    </source>
</evidence>
<evidence type="ECO:0000305" key="13">
    <source>
    </source>
</evidence>
<proteinExistence type="evidence at protein level"/>
<sequence>MAAVATCGSVAASTGSAVATASKSNVTSFQRRGPRASVTNDSGPRLVSIAGTRPSVRNGQLLVSTGLPALDQLLGGGLAVGTVLLIEEDKYNIYSPLLFKYFLAEGIVNGHTLLVASAKEDPANILQELPAPLLDDKCKKEFDEDVYNHKTPESNIKMKIAWRYQLLPKMEIGPVSSSRFGHYYDASKRMPQELIEASNWHGFFLPEKISSTLKVEPCSLTPGYTKLLQFIQNIIYEEGFDGSNPQKKQRNILRIGIQNLGSPLWGDDICCAENGGNSHSLTKFLYVLRGLLRTSLSACIITMPTHLIQNKAIIARVTTLSDVVVGLESFIGSERETNPLYKDYHGLIHIRQIPRLNNLICDESDVKDLAFKLKRKLFTIERLHLPPDLSDTVSRSSKMDLAESAKRLGPGCGMMAGGKKHLDF</sequence>
<protein>
    <recommendedName>
        <fullName>Elongator complex protein 4</fullName>
        <shortName>hELP4</shortName>
    </recommendedName>
    <alternativeName>
        <fullName>PAX6 neighbor gene protein</fullName>
    </alternativeName>
</protein>
<feature type="chain" id="PRO_0000284004" description="Elongator complex protein 4">
    <location>
        <begin position="1"/>
        <end position="424"/>
    </location>
</feature>
<feature type="splice variant" id="VSP_054128" description="In isoform 3." evidence="6">
    <original>E</original>
    <variation>EQ</variation>
    <location>
        <position position="171"/>
    </location>
</feature>
<feature type="splice variant" id="VSP_024409" description="In isoform 2." evidence="7">
    <original>RLHLPPDLSDTVSRSSKMDLAESAKRLGPGCGMMAGGKKHLDF</original>
    <variation>AGVQWHDLGSRRPRLLGSGGSPASASLVAGITGAHHHAQLIFVFLVEMGFHHVGQAGLELLTSGDSSASASQSAGIAGMSYRARPRALYFKENKSKVGARQLLETREEHLSSRLLILTQAERLCMGRRFFTAFHIFNELPCKGDCICLQTCQTQ</variation>
    <location>
        <begin position="382"/>
        <end position="424"/>
    </location>
</feature>
<feature type="splice variant" id="VSP_054129" description="In isoform 3." evidence="6">
    <original>RLHLPPDLSDTVSRSSKMDLAESAKRLGPGCGMMAGGKKHLDF</original>
    <variation>WVQDNYLRQERNIYPPGFSYLLKQKDSAWGEGSLQHSTFLMSFLAKATAFASRLVRHSEPLKQNGSGRIRQAAGPRLWHDGRRQEAPGLLGIPP</variation>
    <location>
        <begin position="382"/>
        <end position="424"/>
    </location>
</feature>
<feature type="sequence variant" id="VAR_053881" description="In dbSNP:rs34804357.">
    <original>I</original>
    <variation>L</variation>
    <location>
        <position position="300"/>
    </location>
</feature>
<keyword id="KW-0025">Alternative splicing</keyword>
<keyword id="KW-0963">Cytoplasm</keyword>
<keyword id="KW-0539">Nucleus</keyword>
<keyword id="KW-1267">Proteomics identification</keyword>
<keyword id="KW-1185">Reference proteome</keyword>
<keyword id="KW-0819">tRNA processing</keyword>
<organism>
    <name type="scientific">Homo sapiens</name>
    <name type="common">Human</name>
    <dbReference type="NCBI Taxonomy" id="9606"/>
    <lineage>
        <taxon>Eukaryota</taxon>
        <taxon>Metazoa</taxon>
        <taxon>Chordata</taxon>
        <taxon>Craniata</taxon>
        <taxon>Vertebrata</taxon>
        <taxon>Euteleostomi</taxon>
        <taxon>Mammalia</taxon>
        <taxon>Eutheria</taxon>
        <taxon>Euarchontoglires</taxon>
        <taxon>Primates</taxon>
        <taxon>Haplorrhini</taxon>
        <taxon>Catarrhini</taxon>
        <taxon>Hominidae</taxon>
        <taxon>Homo</taxon>
    </lineage>
</organism>
<name>ELP4_HUMAN</name>
<gene>
    <name type="primary">ELP4</name>
    <name type="synonym">C11orf19</name>
    <name type="synonym">PAXNEB</name>
</gene>
<reference key="1">
    <citation type="journal article" date="2001" name="Genome Res.">
        <title>Towards a catalog of human genes and proteins: sequencing and analysis of 500 novel complete protein coding human cDNAs.</title>
        <authorList>
            <person name="Wiemann S."/>
            <person name="Weil B."/>
            <person name="Wellenreuther R."/>
            <person name="Gassenhuber J."/>
            <person name="Glassl S."/>
            <person name="Ansorge W."/>
            <person name="Boecher M."/>
            <person name="Bloecker H."/>
            <person name="Bauersachs S."/>
            <person name="Blum H."/>
            <person name="Lauber J."/>
            <person name="Duesterhoeft A."/>
            <person name="Beyer A."/>
            <person name="Koehrer K."/>
            <person name="Strack N."/>
            <person name="Mewes H.-W."/>
            <person name="Ottenwaelder B."/>
            <person name="Obermaier B."/>
            <person name="Tampe J."/>
            <person name="Heubner D."/>
            <person name="Wambutt R."/>
            <person name="Korn B."/>
            <person name="Klein M."/>
            <person name="Poustka A."/>
        </authorList>
    </citation>
    <scope>NUCLEOTIDE SEQUENCE [LARGE SCALE MRNA] (ISOFORM 1)</scope>
    <source>
        <tissue>Brain</tissue>
    </source>
</reference>
<reference key="2">
    <citation type="journal article" date="2004" name="Nat. Genet.">
        <title>Complete sequencing and characterization of 21,243 full-length human cDNAs.</title>
        <authorList>
            <person name="Ota T."/>
            <person name="Suzuki Y."/>
            <person name="Nishikawa T."/>
            <person name="Otsuki T."/>
            <person name="Sugiyama T."/>
            <person name="Irie R."/>
            <person name="Wakamatsu A."/>
            <person name="Hayashi K."/>
            <person name="Sato H."/>
            <person name="Nagai K."/>
            <person name="Kimura K."/>
            <person name="Makita H."/>
            <person name="Sekine M."/>
            <person name="Obayashi M."/>
            <person name="Nishi T."/>
            <person name="Shibahara T."/>
            <person name="Tanaka T."/>
            <person name="Ishii S."/>
            <person name="Yamamoto J."/>
            <person name="Saito K."/>
            <person name="Kawai Y."/>
            <person name="Isono Y."/>
            <person name="Nakamura Y."/>
            <person name="Nagahari K."/>
            <person name="Murakami K."/>
            <person name="Yasuda T."/>
            <person name="Iwayanagi T."/>
            <person name="Wagatsuma M."/>
            <person name="Shiratori A."/>
            <person name="Sudo H."/>
            <person name="Hosoiri T."/>
            <person name="Kaku Y."/>
            <person name="Kodaira H."/>
            <person name="Kondo H."/>
            <person name="Sugawara M."/>
            <person name="Takahashi M."/>
            <person name="Kanda K."/>
            <person name="Yokoi T."/>
            <person name="Furuya T."/>
            <person name="Kikkawa E."/>
            <person name="Omura Y."/>
            <person name="Abe K."/>
            <person name="Kamihara K."/>
            <person name="Katsuta N."/>
            <person name="Sato K."/>
            <person name="Tanikawa M."/>
            <person name="Yamazaki M."/>
            <person name="Ninomiya K."/>
            <person name="Ishibashi T."/>
            <person name="Yamashita H."/>
            <person name="Murakawa K."/>
            <person name="Fujimori K."/>
            <person name="Tanai H."/>
            <person name="Kimata M."/>
            <person name="Watanabe M."/>
            <person name="Hiraoka S."/>
            <person name="Chiba Y."/>
            <person name="Ishida S."/>
            <person name="Ono Y."/>
            <person name="Takiguchi S."/>
            <person name="Watanabe S."/>
            <person name="Yosida M."/>
            <person name="Hotuta T."/>
            <person name="Kusano J."/>
            <person name="Kanehori K."/>
            <person name="Takahashi-Fujii A."/>
            <person name="Hara H."/>
            <person name="Tanase T.-O."/>
            <person name="Nomura Y."/>
            <person name="Togiya S."/>
            <person name="Komai F."/>
            <person name="Hara R."/>
            <person name="Takeuchi K."/>
            <person name="Arita M."/>
            <person name="Imose N."/>
            <person name="Musashino K."/>
            <person name="Yuuki H."/>
            <person name="Oshima A."/>
            <person name="Sasaki N."/>
            <person name="Aotsuka S."/>
            <person name="Yoshikawa Y."/>
            <person name="Matsunawa H."/>
            <person name="Ichihara T."/>
            <person name="Shiohata N."/>
            <person name="Sano S."/>
            <person name="Moriya S."/>
            <person name="Momiyama H."/>
            <person name="Satoh N."/>
            <person name="Takami S."/>
            <person name="Terashima Y."/>
            <person name="Suzuki O."/>
            <person name="Nakagawa S."/>
            <person name="Senoh A."/>
            <person name="Mizoguchi H."/>
            <person name="Goto Y."/>
            <person name="Shimizu F."/>
            <person name="Wakebe H."/>
            <person name="Hishigaki H."/>
            <person name="Watanabe T."/>
            <person name="Sugiyama A."/>
            <person name="Takemoto M."/>
            <person name="Kawakami B."/>
            <person name="Yamazaki M."/>
            <person name="Watanabe K."/>
            <person name="Kumagai A."/>
            <person name="Itakura S."/>
            <person name="Fukuzumi Y."/>
            <person name="Fujimori Y."/>
            <person name="Komiyama M."/>
            <person name="Tashiro H."/>
            <person name="Tanigami A."/>
            <person name="Fujiwara T."/>
            <person name="Ono T."/>
            <person name="Yamada K."/>
            <person name="Fujii Y."/>
            <person name="Ozaki K."/>
            <person name="Hirao M."/>
            <person name="Ohmori Y."/>
            <person name="Kawabata A."/>
            <person name="Hikiji T."/>
            <person name="Kobatake N."/>
            <person name="Inagaki H."/>
            <person name="Ikema Y."/>
            <person name="Okamoto S."/>
            <person name="Okitani R."/>
            <person name="Kawakami T."/>
            <person name="Noguchi S."/>
            <person name="Itoh T."/>
            <person name="Shigeta K."/>
            <person name="Senba T."/>
            <person name="Matsumura K."/>
            <person name="Nakajima Y."/>
            <person name="Mizuno T."/>
            <person name="Morinaga M."/>
            <person name="Sasaki M."/>
            <person name="Togashi T."/>
            <person name="Oyama M."/>
            <person name="Hata H."/>
            <person name="Watanabe M."/>
            <person name="Komatsu T."/>
            <person name="Mizushima-Sugano J."/>
            <person name="Satoh T."/>
            <person name="Shirai Y."/>
            <person name="Takahashi Y."/>
            <person name="Nakagawa K."/>
            <person name="Okumura K."/>
            <person name="Nagase T."/>
            <person name="Nomura N."/>
            <person name="Kikuchi H."/>
            <person name="Masuho Y."/>
            <person name="Yamashita R."/>
            <person name="Nakai K."/>
            <person name="Yada T."/>
            <person name="Nakamura Y."/>
            <person name="Ohara O."/>
            <person name="Isogai T."/>
            <person name="Sugano S."/>
        </authorList>
    </citation>
    <scope>NUCLEOTIDE SEQUENCE [LARGE SCALE MRNA] (ISOFORMS 1 AND 3)</scope>
</reference>
<reference key="3">
    <citation type="journal article" date="2006" name="Nature">
        <title>Human chromosome 11 DNA sequence and analysis including novel gene identification.</title>
        <authorList>
            <person name="Taylor T.D."/>
            <person name="Noguchi H."/>
            <person name="Totoki Y."/>
            <person name="Toyoda A."/>
            <person name="Kuroki Y."/>
            <person name="Dewar K."/>
            <person name="Lloyd C."/>
            <person name="Itoh T."/>
            <person name="Takeda T."/>
            <person name="Kim D.-W."/>
            <person name="She X."/>
            <person name="Barlow K.F."/>
            <person name="Bloom T."/>
            <person name="Bruford E."/>
            <person name="Chang J.L."/>
            <person name="Cuomo C.A."/>
            <person name="Eichler E."/>
            <person name="FitzGerald M.G."/>
            <person name="Jaffe D.B."/>
            <person name="LaButti K."/>
            <person name="Nicol R."/>
            <person name="Park H.-S."/>
            <person name="Seaman C."/>
            <person name="Sougnez C."/>
            <person name="Yang X."/>
            <person name="Zimmer A.R."/>
            <person name="Zody M.C."/>
            <person name="Birren B.W."/>
            <person name="Nusbaum C."/>
            <person name="Fujiyama A."/>
            <person name="Hattori M."/>
            <person name="Rogers J."/>
            <person name="Lander E.S."/>
            <person name="Sakaki Y."/>
        </authorList>
    </citation>
    <scope>NUCLEOTIDE SEQUENCE [LARGE SCALE GENOMIC DNA]</scope>
</reference>
<reference key="4">
    <citation type="journal article" date="2004" name="Genome Res.">
        <title>The status, quality, and expansion of the NIH full-length cDNA project: the Mammalian Gene Collection (MGC).</title>
        <authorList>
            <consortium name="The MGC Project Team"/>
        </authorList>
    </citation>
    <scope>NUCLEOTIDE SEQUENCE [LARGE SCALE MRNA] (ISOFORM 2)</scope>
    <source>
        <tissue>Testis</tissue>
    </source>
</reference>
<reference key="5">
    <citation type="journal article" date="2002" name="Mamm. Genome">
        <title>Characterization of a novel gene adjacent to PAX6, revealing synteny conservation with functional significance.</title>
        <authorList>
            <person name="Kleinjan D.A."/>
            <person name="Seawright A."/>
            <person name="Elgar G."/>
            <person name="van Heyningen V."/>
        </authorList>
    </citation>
    <scope>NUCLEOTIDE SEQUENCE [GENOMIC DNA] OF 1-74</scope>
    <scope>SUBCELLULAR LOCATION</scope>
    <scope>TISSUE SPECIFICITY</scope>
</reference>
<reference key="6">
    <citation type="journal article" date="2002" name="J. Biol. Chem.">
        <title>Purification and characterization of the human elongator complex.</title>
        <authorList>
            <person name="Hawkes N.A."/>
            <person name="Otero G."/>
            <person name="Winkler G.S."/>
            <person name="Marshall N."/>
            <person name="Dahmus M.E."/>
            <person name="Krappmann D."/>
            <person name="Scheidereit C."/>
            <person name="Thomas C.L."/>
            <person name="Schiavo G."/>
            <person name="Erdjument-Bromage H."/>
            <person name="Tempst P."/>
            <person name="Svejstrup J.Q."/>
        </authorList>
    </citation>
    <scope>IDENTIFICATION IN THE ELONGATOR COMPLEX</scope>
    <scope>IDENTIFICATION BY MASS SPECTROMETRY</scope>
</reference>
<reference key="7">
    <citation type="journal article" date="2002" name="Proc. Natl. Acad. Sci. U.S.A.">
        <title>Human Elongator facilitates RNA polymerase II transcription through chromatin.</title>
        <authorList>
            <person name="Kim J.H."/>
            <person name="Lane W.S."/>
            <person name="Reinberg D."/>
        </authorList>
    </citation>
    <scope>SUBCELLULAR LOCATION</scope>
</reference>
<reference key="8">
    <citation type="journal article" date="2006" name="Mol. Cell">
        <title>Transcription impairment and cell migration defects in elongator-depleted cells: implication for familial dysautonomia.</title>
        <authorList>
            <person name="Close P."/>
            <person name="Hawkes N."/>
            <person name="Cornez I."/>
            <person name="Creppe C."/>
            <person name="Lambert C.A."/>
            <person name="Rogister B."/>
            <person name="Siebenlist U."/>
            <person name="Merville M.P."/>
            <person name="Slaugenhaupt S.A."/>
            <person name="Bours V."/>
            <person name="Svejstrup J.Q."/>
            <person name="Chariot A."/>
        </authorList>
    </citation>
    <scope>DISPUTED FUNCTION IN HISTONE ACETYLATION</scope>
</reference>
<reference key="9">
    <citation type="journal article" date="2011" name="BMC Syst. Biol.">
        <title>Initial characterization of the human central proteome.</title>
        <authorList>
            <person name="Burkard T.R."/>
            <person name="Planyavsky M."/>
            <person name="Kaupe I."/>
            <person name="Breitwieser F.P."/>
            <person name="Buerckstuemmer T."/>
            <person name="Bennett K.L."/>
            <person name="Superti-Furga G."/>
            <person name="Colinge J."/>
        </authorList>
    </citation>
    <scope>IDENTIFICATION BY MASS SPECTROMETRY [LARGE SCALE ANALYSIS]</scope>
</reference>
<reference key="10">
    <citation type="journal article" date="2012" name="J. Biol. Chem.">
        <title>DERP6 (ELP5) and C3ORF75 (ELP6) regulate tumorigenicity and migration of melanoma cells as subunits of Elongator.</title>
        <authorList>
            <person name="Close P."/>
            <person name="Gillard M."/>
            <person name="Ladang A."/>
            <person name="Jiang Z."/>
            <person name="Papuga J."/>
            <person name="Hawkes N."/>
            <person name="Nguyen L."/>
            <person name="Chapelle J.P."/>
            <person name="Bouillenne F."/>
            <person name="Svejstrup J."/>
            <person name="Fillet M."/>
            <person name="Chariot A."/>
        </authorList>
    </citation>
    <scope>IDENTIFICATION IN THE ELONGATOR COMPLEX</scope>
    <scope>SUBCELLULAR LOCATION</scope>
</reference>
<reference key="11">
    <citation type="journal article" date="2013" name="Am. J. Hum. Genet.">
        <title>Disruption of autoregulatory feedback by a mutation in a remote, ultraconserved PAX6 enhancer causes aniridia.</title>
        <authorList>
            <person name="Bhatia S."/>
            <person name="Bengani H."/>
            <person name="Fish M."/>
            <person name="Brown A."/>
            <person name="Divizia M.T."/>
            <person name="de Marco R."/>
            <person name="Damante G."/>
            <person name="Grainger R."/>
            <person name="van Heyningen V."/>
            <person name="Kleinjan D.A."/>
        </authorList>
    </citation>
    <scope>INVOLVEMENT IN AN2</scope>
</reference>
<reference key="12">
    <citation type="journal article" date="2018" name="Cell. Mol. Life Sci.">
        <title>Structural insights into the function of Elongator.</title>
        <authorList>
            <person name="Dalwadi U."/>
            <person name="Yip C.K."/>
        </authorList>
    </citation>
    <scope>REVIEW</scope>
</reference>